<gene>
    <name evidence="8" type="ORF">LOC107821171</name>
</gene>
<accession>A0A1S4CPU8</accession>
<organism>
    <name type="scientific">Nicotiana tabacum</name>
    <name type="common">Common tobacco</name>
    <dbReference type="NCBI Taxonomy" id="4097"/>
    <lineage>
        <taxon>Eukaryota</taxon>
        <taxon>Viridiplantae</taxon>
        <taxon>Streptophyta</taxon>
        <taxon>Embryophyta</taxon>
        <taxon>Tracheophyta</taxon>
        <taxon>Spermatophyta</taxon>
        <taxon>Magnoliopsida</taxon>
        <taxon>eudicotyledons</taxon>
        <taxon>Gunneridae</taxon>
        <taxon>Pentapetalae</taxon>
        <taxon>asterids</taxon>
        <taxon>lamiids</taxon>
        <taxon>Solanales</taxon>
        <taxon>Solanaceae</taxon>
        <taxon>Nicotianoideae</taxon>
        <taxon>Nicotianeae</taxon>
        <taxon>Nicotiana</taxon>
    </lineage>
</organism>
<protein>
    <recommendedName>
        <fullName evidence="7">Berberine bridge enzyme-like D-2</fullName>
        <ecNumber evidence="2">1.1.1.-</ecNumber>
    </recommendedName>
</protein>
<keyword id="KW-0017">Alkaloid metabolism</keyword>
<keyword id="KW-1015">Disulfide bond</keyword>
<keyword id="KW-0274">FAD</keyword>
<keyword id="KW-0285">Flavoprotein</keyword>
<keyword id="KW-0325">Glycoprotein</keyword>
<keyword id="KW-0560">Oxidoreductase</keyword>
<keyword id="KW-1185">Reference proteome</keyword>
<keyword id="KW-0732">Signal</keyword>
<keyword id="KW-0926">Vacuole</keyword>
<reference key="1">
    <citation type="journal article" date="2014" name="Nat. Commun.">
        <title>The tobacco genome sequence and its comparison with those of tomato and potato.</title>
        <authorList>
            <person name="Sierro N."/>
            <person name="Battey J.N."/>
            <person name="Ouadi S."/>
            <person name="Bakaher N."/>
            <person name="Bovet L."/>
            <person name="Willig A."/>
            <person name="Goepfert S."/>
            <person name="Peitsch M.C."/>
            <person name="Ivanov N.V."/>
        </authorList>
    </citation>
    <scope>NUCLEOTIDE SEQUENCE [LARGE SCALE GENOMIC DNA]</scope>
    <source>
        <strain>cv. TN90</strain>
    </source>
</reference>
<reference key="2">
    <citation type="journal article" date="2013" name="Phytochemistry">
        <title>Molecular genetics of alkaloid biosynthesis in Nicotiana tabacum.</title>
        <authorList>
            <person name="Dewey R.E."/>
            <person name="Xie J."/>
        </authorList>
    </citation>
    <scope>REVIEW ON ALKALOID BIOSYNTHESIS IN NICOTIANA TABACUM</scope>
</reference>
<reference key="3">
    <citation type="journal article" date="2015" name="Mol. Genet. Genomics">
        <title>Current status and prospects for the study of Nicotiana genomics, genetics, and nicotine biosynthesis genes.</title>
        <authorList>
            <person name="Wang X."/>
            <person name="Bennetzen J.L."/>
        </authorList>
    </citation>
    <scope>REVIEW ON NICOTINE BIOSYNTHESIS</scope>
</reference>
<dbReference type="EC" id="1.1.1.-" evidence="2"/>
<dbReference type="RefSeq" id="XP_016503076.1">
    <property type="nucleotide sequence ID" value="XM_016647590.1"/>
</dbReference>
<dbReference type="SMR" id="A0A1S4CPU8"/>
<dbReference type="STRING" id="4097.A0A1S4CPU8"/>
<dbReference type="PaxDb" id="4097-A0A1S4CPU8"/>
<dbReference type="GeneID" id="107821171"/>
<dbReference type="KEGG" id="nta:107821171"/>
<dbReference type="OMA" id="QPDEIWS"/>
<dbReference type="OrthoDB" id="407275at2759"/>
<dbReference type="UniPathway" id="UPA00107"/>
<dbReference type="Proteomes" id="UP000084051">
    <property type="component" value="Unplaced"/>
</dbReference>
<dbReference type="GO" id="GO:0005773">
    <property type="term" value="C:vacuole"/>
    <property type="evidence" value="ECO:0007669"/>
    <property type="project" value="UniProtKB-SubCell"/>
</dbReference>
<dbReference type="GO" id="GO:0071949">
    <property type="term" value="F:FAD binding"/>
    <property type="evidence" value="ECO:0007669"/>
    <property type="project" value="InterPro"/>
</dbReference>
<dbReference type="GO" id="GO:0016491">
    <property type="term" value="F:oxidoreductase activity"/>
    <property type="evidence" value="ECO:0007669"/>
    <property type="project" value="UniProtKB-KW"/>
</dbReference>
<dbReference type="GO" id="GO:0009820">
    <property type="term" value="P:alkaloid metabolic process"/>
    <property type="evidence" value="ECO:0007669"/>
    <property type="project" value="UniProtKB-KW"/>
</dbReference>
<dbReference type="GO" id="GO:0042179">
    <property type="term" value="P:nicotine biosynthetic process"/>
    <property type="evidence" value="ECO:0007669"/>
    <property type="project" value="UniProtKB-UniPathway"/>
</dbReference>
<dbReference type="Gene3D" id="3.30.465.10">
    <property type="match status" value="1"/>
</dbReference>
<dbReference type="Gene3D" id="3.40.462.20">
    <property type="match status" value="1"/>
</dbReference>
<dbReference type="Gene3D" id="3.30.43.10">
    <property type="entry name" value="Uridine Diphospho-n-acetylenolpyruvylglucosamine Reductase, domain 2"/>
    <property type="match status" value="1"/>
</dbReference>
<dbReference type="InterPro" id="IPR012951">
    <property type="entry name" value="BBE"/>
</dbReference>
<dbReference type="InterPro" id="IPR016166">
    <property type="entry name" value="FAD-bd_PCMH"/>
</dbReference>
<dbReference type="InterPro" id="IPR036318">
    <property type="entry name" value="FAD-bd_PCMH-like_sf"/>
</dbReference>
<dbReference type="InterPro" id="IPR016167">
    <property type="entry name" value="FAD-bd_PCMH_sub1"/>
</dbReference>
<dbReference type="InterPro" id="IPR016169">
    <property type="entry name" value="FAD-bd_PCMH_sub2"/>
</dbReference>
<dbReference type="InterPro" id="IPR006094">
    <property type="entry name" value="Oxid_FAD_bind_N"/>
</dbReference>
<dbReference type="PANTHER" id="PTHR32448">
    <property type="entry name" value="OS08G0158400 PROTEIN"/>
    <property type="match status" value="1"/>
</dbReference>
<dbReference type="Pfam" id="PF08031">
    <property type="entry name" value="BBE"/>
    <property type="match status" value="1"/>
</dbReference>
<dbReference type="Pfam" id="PF01565">
    <property type="entry name" value="FAD_binding_4"/>
    <property type="match status" value="1"/>
</dbReference>
<dbReference type="SUPFAM" id="SSF56176">
    <property type="entry name" value="FAD-binding/transporter-associated domain-like"/>
    <property type="match status" value="1"/>
</dbReference>
<dbReference type="PROSITE" id="PS51387">
    <property type="entry name" value="FAD_PCMH"/>
    <property type="match status" value="1"/>
</dbReference>
<comment type="function">
    <text evidence="1">Involved in the biosynthesis of pyridine alkaloid natural products, leading mainly to the production of anabasine, anatabine, nicotine and nornicotine, effective deterrents against herbivores with antiparasitic and pesticide properties (neurotoxins); nornicotine serves as the precursor in the synthesis of the carcinogen compound N'-nitrosonornicotine (NNN) (By similarity). Catalyzes a late oxidation step subsequent to the pyridine ring condensation reaction in the biosynthesis of alkaloids (By similarity).</text>
</comment>
<comment type="cofactor">
    <cofactor evidence="1">
        <name>FAD</name>
        <dbReference type="ChEBI" id="CHEBI:57692"/>
    </cofactor>
</comment>
<comment type="pathway">
    <text evidence="1">Alkaloid biosynthesis; nicotine biosynthesis.</text>
</comment>
<comment type="subcellular location">
    <subcellularLocation>
        <location evidence="1">Vacuole</location>
    </subcellularLocation>
</comment>
<comment type="similarity">
    <text evidence="7">Belongs to the oxygen-dependent FAD-linked oxidoreductase family.</text>
</comment>
<proteinExistence type="inferred from homology"/>
<feature type="signal peptide" evidence="4">
    <location>
        <begin position="1"/>
        <end position="33"/>
    </location>
</feature>
<feature type="chain" id="PRO_5010171957" description="Berberine bridge enzyme-like D-2">
    <location>
        <begin position="34"/>
        <end position="566"/>
    </location>
</feature>
<feature type="domain" description="FAD-binding PCMH-type" evidence="6">
    <location>
        <begin position="81"/>
        <end position="257"/>
    </location>
</feature>
<feature type="modified residue" description="Pros-8alpha-FAD histidine" evidence="3">
    <location>
        <position position="118"/>
    </location>
</feature>
<feature type="glycosylation site" description="N-linked (GlcNAc...) asparagine" evidence="5">
    <location>
        <position position="50"/>
    </location>
</feature>
<feature type="glycosylation site" description="N-linked (GlcNAc...) asparagine" evidence="5">
    <location>
        <position position="364"/>
    </location>
</feature>
<feature type="glycosylation site" description="N-linked (GlcNAc...) asparagine" evidence="5">
    <location>
        <position position="378"/>
    </location>
</feature>
<feature type="glycosylation site" description="N-linked (GlcNAc...) asparagine" evidence="5">
    <location>
        <position position="503"/>
    </location>
</feature>
<feature type="disulfide bond" evidence="2">
    <location>
        <begin position="42"/>
        <end position="103"/>
    </location>
</feature>
<evidence type="ECO:0000250" key="1">
    <source>
        <dbReference type="UniProtKB" id="F1T160"/>
    </source>
</evidence>
<evidence type="ECO:0000250" key="2">
    <source>
        <dbReference type="UniProtKB" id="O64743"/>
    </source>
</evidence>
<evidence type="ECO:0000250" key="3">
    <source>
        <dbReference type="UniProtKB" id="Q9FI21"/>
    </source>
</evidence>
<evidence type="ECO:0000255" key="4"/>
<evidence type="ECO:0000255" key="5">
    <source>
        <dbReference type="PROSITE-ProRule" id="PRU00498"/>
    </source>
</evidence>
<evidence type="ECO:0000255" key="6">
    <source>
        <dbReference type="PROSITE-ProRule" id="PRU00718"/>
    </source>
</evidence>
<evidence type="ECO:0000305" key="7"/>
<evidence type="ECO:0000312" key="8">
    <source>
        <dbReference type="RefSeq" id="XP_016503076.1"/>
    </source>
</evidence>
<sequence length="566" mass="63149">MKRNISMSLQRLLIILMMISFLFTSLLVPSVSATNLNTISTCLINYKVSNFSVYPTRNHAGNRYYNLLDFSIQNLRFAASSKPKPTVIIVPESKEQLVSSVLCCRQGSYEIRVRCGGHSYEGTSYVSFDGSPFVVIDLMKLDDVSVDLDSETAWVQGGATLGQTYYAISRASDVHGFSAGSCPTVGVGGHISGGGFGFLSRKYGLAADNVVDALLVDAEGRLLDRKAMGEEVFWAIRGGGGGIWGIIYAWKIRLLKVPKTVTSFIVPRPGSKRYVSQLVHKWQLVAPKLDDDFYLSISMSSASKGNIPIEINAQFSGFYLGTKTEAISILNEAFPELGVVESDCKEMSWIESTLFFSELDNVANTSDVSRLKERYFENKSYFKAKSDHVKTPISVGGIMTALDVLEKEPNGHVIFDPYGAAMQRISEEAIAFPHRKGNLFRIQYLVVWKEKDNNNIAKSNGYIEWIREFYNTMAPHVSSSPRAAYVNYMDLDLGVMDDYLMLNTSITASADHAVERARVWGEKYFLNNYDRLVKAKTKIDPLNVFRHQQGIPPMFASMPEHTYSSK</sequence>
<name>BBLD2_TOBAC</name>